<keyword id="KW-0021">Allosteric enzyme</keyword>
<keyword id="KW-0963">Cytoplasm</keyword>
<keyword id="KW-0378">Hydrolase</keyword>
<keyword id="KW-0479">Metal-binding</keyword>
<keyword id="KW-0645">Protease</keyword>
<keyword id="KW-0915">Sodium</keyword>
<keyword id="KW-0888">Threonine protease</keyword>
<proteinExistence type="inferred from homology"/>
<sequence length="174" mass="18895">MTTIVSVRRDGHVVIGGDGQVTLGNTVMKGNAKKVRRLYNNKVIAGFAGGTADAFTLFELFERKLEMHQGHLTKAAVELAKDWRTDRMLRKLEALLAVADETASLIITGNGDVVQPEDDLIAIGSGGPYAQSAARALLENTELGARDIVEKSLSIAGDICIYTNRFQTIEELTY</sequence>
<gene>
    <name evidence="1" type="primary">hslV</name>
    <name type="ordered locus">YPK_4103</name>
</gene>
<evidence type="ECO:0000255" key="1">
    <source>
        <dbReference type="HAMAP-Rule" id="MF_00248"/>
    </source>
</evidence>
<reference key="1">
    <citation type="submission" date="2008-02" db="EMBL/GenBank/DDBJ databases">
        <title>Complete sequence of Yersinia pseudotuberculosis YPIII.</title>
        <authorList>
            <consortium name="US DOE Joint Genome Institute"/>
            <person name="Copeland A."/>
            <person name="Lucas S."/>
            <person name="Lapidus A."/>
            <person name="Glavina del Rio T."/>
            <person name="Dalin E."/>
            <person name="Tice H."/>
            <person name="Bruce D."/>
            <person name="Goodwin L."/>
            <person name="Pitluck S."/>
            <person name="Munk A.C."/>
            <person name="Brettin T."/>
            <person name="Detter J.C."/>
            <person name="Han C."/>
            <person name="Tapia R."/>
            <person name="Schmutz J."/>
            <person name="Larimer F."/>
            <person name="Land M."/>
            <person name="Hauser L."/>
            <person name="Challacombe J.F."/>
            <person name="Green L."/>
            <person name="Lindler L.E."/>
            <person name="Nikolich M.P."/>
            <person name="Richardson P."/>
        </authorList>
    </citation>
    <scope>NUCLEOTIDE SEQUENCE [LARGE SCALE GENOMIC DNA]</scope>
    <source>
        <strain>YPIII</strain>
    </source>
</reference>
<protein>
    <recommendedName>
        <fullName evidence="1">ATP-dependent protease subunit HslV</fullName>
        <ecNumber evidence="1">3.4.25.2</ecNumber>
    </recommendedName>
</protein>
<organism>
    <name type="scientific">Yersinia pseudotuberculosis serotype O:3 (strain YPIII)</name>
    <dbReference type="NCBI Taxonomy" id="502800"/>
    <lineage>
        <taxon>Bacteria</taxon>
        <taxon>Pseudomonadati</taxon>
        <taxon>Pseudomonadota</taxon>
        <taxon>Gammaproteobacteria</taxon>
        <taxon>Enterobacterales</taxon>
        <taxon>Yersiniaceae</taxon>
        <taxon>Yersinia</taxon>
    </lineage>
</organism>
<accession>B1JQ75</accession>
<comment type="function">
    <text evidence="1">Protease subunit of a proteasome-like degradation complex believed to be a general protein degrading machinery.</text>
</comment>
<comment type="catalytic activity">
    <reaction evidence="1">
        <text>ATP-dependent cleavage of peptide bonds with broad specificity.</text>
        <dbReference type="EC" id="3.4.25.2"/>
    </reaction>
</comment>
<comment type="activity regulation">
    <text evidence="1">Allosterically activated by HslU binding.</text>
</comment>
<comment type="subunit">
    <text evidence="1">A double ring-shaped homohexamer of HslV is capped on each side by a ring-shaped HslU homohexamer. The assembly of the HslU/HslV complex is dependent on binding of ATP.</text>
</comment>
<comment type="subcellular location">
    <subcellularLocation>
        <location evidence="1">Cytoplasm</location>
    </subcellularLocation>
</comment>
<comment type="similarity">
    <text evidence="1">Belongs to the peptidase T1B family. HslV subfamily.</text>
</comment>
<feature type="chain" id="PRO_1000100928" description="ATP-dependent protease subunit HslV">
    <location>
        <begin position="1"/>
        <end position="174"/>
    </location>
</feature>
<feature type="active site" evidence="1">
    <location>
        <position position="2"/>
    </location>
</feature>
<feature type="binding site" evidence="1">
    <location>
        <position position="157"/>
    </location>
    <ligand>
        <name>Na(+)</name>
        <dbReference type="ChEBI" id="CHEBI:29101"/>
    </ligand>
</feature>
<feature type="binding site" evidence="1">
    <location>
        <position position="160"/>
    </location>
    <ligand>
        <name>Na(+)</name>
        <dbReference type="ChEBI" id="CHEBI:29101"/>
    </ligand>
</feature>
<feature type="binding site" evidence="1">
    <location>
        <position position="163"/>
    </location>
    <ligand>
        <name>Na(+)</name>
        <dbReference type="ChEBI" id="CHEBI:29101"/>
    </ligand>
</feature>
<dbReference type="EC" id="3.4.25.2" evidence="1"/>
<dbReference type="EMBL" id="CP000950">
    <property type="protein sequence ID" value="ACA70362.1"/>
    <property type="molecule type" value="Genomic_DNA"/>
</dbReference>
<dbReference type="RefSeq" id="WP_002208942.1">
    <property type="nucleotide sequence ID" value="NZ_CP009792.1"/>
</dbReference>
<dbReference type="SMR" id="B1JQ75"/>
<dbReference type="MEROPS" id="T01.006"/>
<dbReference type="GeneID" id="97458253"/>
<dbReference type="KEGG" id="ypy:YPK_4103"/>
<dbReference type="PATRIC" id="fig|502800.11.peg.451"/>
<dbReference type="GO" id="GO:0009376">
    <property type="term" value="C:HslUV protease complex"/>
    <property type="evidence" value="ECO:0007669"/>
    <property type="project" value="UniProtKB-UniRule"/>
</dbReference>
<dbReference type="GO" id="GO:0005839">
    <property type="term" value="C:proteasome core complex"/>
    <property type="evidence" value="ECO:0007669"/>
    <property type="project" value="InterPro"/>
</dbReference>
<dbReference type="GO" id="GO:0046872">
    <property type="term" value="F:metal ion binding"/>
    <property type="evidence" value="ECO:0007669"/>
    <property type="project" value="UniProtKB-KW"/>
</dbReference>
<dbReference type="GO" id="GO:0004298">
    <property type="term" value="F:threonine-type endopeptidase activity"/>
    <property type="evidence" value="ECO:0007669"/>
    <property type="project" value="UniProtKB-KW"/>
</dbReference>
<dbReference type="GO" id="GO:0051603">
    <property type="term" value="P:proteolysis involved in protein catabolic process"/>
    <property type="evidence" value="ECO:0007669"/>
    <property type="project" value="InterPro"/>
</dbReference>
<dbReference type="CDD" id="cd01913">
    <property type="entry name" value="protease_HslV"/>
    <property type="match status" value="1"/>
</dbReference>
<dbReference type="FunFam" id="3.60.20.10:FF:000002">
    <property type="entry name" value="ATP-dependent protease subunit HslV"/>
    <property type="match status" value="1"/>
</dbReference>
<dbReference type="Gene3D" id="3.60.20.10">
    <property type="entry name" value="Glutamine Phosphoribosylpyrophosphate, subunit 1, domain 1"/>
    <property type="match status" value="1"/>
</dbReference>
<dbReference type="HAMAP" id="MF_00248">
    <property type="entry name" value="HslV"/>
    <property type="match status" value="1"/>
</dbReference>
<dbReference type="InterPro" id="IPR022281">
    <property type="entry name" value="ATP-dep_Prtase_HsIV_su"/>
</dbReference>
<dbReference type="InterPro" id="IPR029055">
    <property type="entry name" value="Ntn_hydrolases_N"/>
</dbReference>
<dbReference type="InterPro" id="IPR001353">
    <property type="entry name" value="Proteasome_sua/b"/>
</dbReference>
<dbReference type="InterPro" id="IPR023333">
    <property type="entry name" value="Proteasome_suB-type"/>
</dbReference>
<dbReference type="NCBIfam" id="TIGR03692">
    <property type="entry name" value="ATP_dep_HslV"/>
    <property type="match status" value="1"/>
</dbReference>
<dbReference type="NCBIfam" id="NF003964">
    <property type="entry name" value="PRK05456.1"/>
    <property type="match status" value="1"/>
</dbReference>
<dbReference type="PANTHER" id="PTHR32194:SF0">
    <property type="entry name" value="ATP-DEPENDENT PROTEASE SUBUNIT HSLV"/>
    <property type="match status" value="1"/>
</dbReference>
<dbReference type="PANTHER" id="PTHR32194">
    <property type="entry name" value="METALLOPROTEASE TLDD"/>
    <property type="match status" value="1"/>
</dbReference>
<dbReference type="Pfam" id="PF00227">
    <property type="entry name" value="Proteasome"/>
    <property type="match status" value="1"/>
</dbReference>
<dbReference type="PIRSF" id="PIRSF039093">
    <property type="entry name" value="HslV"/>
    <property type="match status" value="1"/>
</dbReference>
<dbReference type="SUPFAM" id="SSF56235">
    <property type="entry name" value="N-terminal nucleophile aminohydrolases (Ntn hydrolases)"/>
    <property type="match status" value="1"/>
</dbReference>
<dbReference type="PROSITE" id="PS51476">
    <property type="entry name" value="PROTEASOME_BETA_2"/>
    <property type="match status" value="1"/>
</dbReference>
<name>HSLV_YERPY</name>